<comment type="function">
    <text evidence="1">Catalyzes the two-electron reduction of the C2 and C3(1) diene system of 15,16-dihydrobiliverdin.</text>
</comment>
<comment type="catalytic activity">
    <reaction evidence="1">
        <text>(3Z)-phycoerythrobilin + oxidized 2[4Fe-4S]-[ferredoxin] = 15,16-dihydrobiliverdin + reduced 2[4Fe-4S]-[ferredoxin] + 2 H(+)</text>
        <dbReference type="Rhea" id="RHEA:22092"/>
        <dbReference type="Rhea" id="RHEA-COMP:10002"/>
        <dbReference type="Rhea" id="RHEA-COMP:10004"/>
        <dbReference type="ChEBI" id="CHEBI:15378"/>
        <dbReference type="ChEBI" id="CHEBI:33722"/>
        <dbReference type="ChEBI" id="CHEBI:33723"/>
        <dbReference type="ChEBI" id="CHEBI:57438"/>
        <dbReference type="ChEBI" id="CHEBI:57899"/>
        <dbReference type="EC" id="1.3.7.3"/>
    </reaction>
</comment>
<comment type="similarity">
    <text evidence="1">Belongs to the HY2 family.</text>
</comment>
<gene>
    <name evidence="1" type="primary">pebB</name>
    <name type="ordered locus">P9211_17131</name>
</gene>
<name>PEBB_PROM4</name>
<sequence length="257" mass="29683">MKRERNNSLDPLEISEWRWSEFLDDAIKALELFDIEPYPIPEEFLTKEETIKFKNNQIKVKALTWACRTTKIRQARAACIEAGPAASVLNLVINPFHNFELPFFGADFVTLPSGHLLALDLQPVLKKDEIHNQKVWSKLIPIHDHWQSLLPSGGPIPQEAETFFSPGFLWTRLPLDDQGSKLISKVIRPAFQEYLTLYIDLISDAQEVSKERSLEILSGQKAYINYRAEKDPARGMLARFFGKDWTEQYIHKVLFDL</sequence>
<proteinExistence type="inferred from homology"/>
<protein>
    <recommendedName>
        <fullName evidence="1">Phycoerythrobilin:ferredoxin oxidoreductase</fullName>
        <ecNumber evidence="1">1.3.7.3</ecNumber>
    </recommendedName>
</protein>
<reference key="1">
    <citation type="journal article" date="2007" name="PLoS Genet.">
        <title>Patterns and implications of gene gain and loss in the evolution of Prochlorococcus.</title>
        <authorList>
            <person name="Kettler G.C."/>
            <person name="Martiny A.C."/>
            <person name="Huang K."/>
            <person name="Zucker J."/>
            <person name="Coleman M.L."/>
            <person name="Rodrigue S."/>
            <person name="Chen F."/>
            <person name="Lapidus A."/>
            <person name="Ferriera S."/>
            <person name="Johnson J."/>
            <person name="Steglich C."/>
            <person name="Church G.M."/>
            <person name="Richardson P."/>
            <person name="Chisholm S.W."/>
        </authorList>
    </citation>
    <scope>NUCLEOTIDE SEQUENCE [LARGE SCALE GENOMIC DNA]</scope>
    <source>
        <strain>MIT 9211</strain>
    </source>
</reference>
<dbReference type="EC" id="1.3.7.3" evidence="1"/>
<dbReference type="EMBL" id="CP000878">
    <property type="protein sequence ID" value="ABX09644.1"/>
    <property type="molecule type" value="Genomic_DNA"/>
</dbReference>
<dbReference type="RefSeq" id="WP_012196264.1">
    <property type="nucleotide sequence ID" value="NC_009976.1"/>
</dbReference>
<dbReference type="SMR" id="A9BCT2"/>
<dbReference type="STRING" id="93059.P9211_17131"/>
<dbReference type="KEGG" id="pmj:P9211_17131"/>
<dbReference type="eggNOG" id="ENOG502Z8GK">
    <property type="taxonomic scope" value="Bacteria"/>
</dbReference>
<dbReference type="HOGENOM" id="CLU_086208_1_0_3"/>
<dbReference type="OrthoDB" id="421401at2"/>
<dbReference type="Proteomes" id="UP000000788">
    <property type="component" value="Chromosome"/>
</dbReference>
<dbReference type="GO" id="GO:0050897">
    <property type="term" value="F:cobalt ion binding"/>
    <property type="evidence" value="ECO:0007669"/>
    <property type="project" value="InterPro"/>
</dbReference>
<dbReference type="GO" id="GO:0050618">
    <property type="term" value="F:phycoerythrobilin:ferredoxin oxidoreductase activity"/>
    <property type="evidence" value="ECO:0007669"/>
    <property type="project" value="UniProtKB-UniRule"/>
</dbReference>
<dbReference type="GO" id="GO:0010024">
    <property type="term" value="P:phytochromobilin biosynthetic process"/>
    <property type="evidence" value="ECO:0007669"/>
    <property type="project" value="InterPro"/>
</dbReference>
<dbReference type="Gene3D" id="3.40.1500.20">
    <property type="match status" value="1"/>
</dbReference>
<dbReference type="HAMAP" id="MF_00793">
    <property type="entry name" value="PebB"/>
    <property type="match status" value="1"/>
</dbReference>
<dbReference type="InterPro" id="IPR009249">
    <property type="entry name" value="Ferredoxin-dep_bilin_Rdtase"/>
</dbReference>
<dbReference type="InterPro" id="IPR022827">
    <property type="entry name" value="Phycoerythrobilin_Fdx_Rdtase"/>
</dbReference>
<dbReference type="NCBIfam" id="NF009722">
    <property type="entry name" value="PRK13249.1"/>
    <property type="match status" value="1"/>
</dbReference>
<dbReference type="PANTHER" id="PTHR34557">
    <property type="entry name" value="PHYTOCHROMOBILIN:FERREDOXIN OXIDOREDUCTASE, CHLOROPLASTIC"/>
    <property type="match status" value="1"/>
</dbReference>
<dbReference type="PANTHER" id="PTHR34557:SF1">
    <property type="entry name" value="PHYTOCHROMOBILIN:FERREDOXIN OXIDOREDUCTASE, CHLOROPLASTIC"/>
    <property type="match status" value="1"/>
</dbReference>
<dbReference type="Pfam" id="PF05996">
    <property type="entry name" value="Fe_bilin_red"/>
    <property type="match status" value="1"/>
</dbReference>
<feature type="chain" id="PRO_1000133828" description="Phycoerythrobilin:ferredoxin oxidoreductase">
    <location>
        <begin position="1"/>
        <end position="257"/>
    </location>
</feature>
<accession>A9BCT2</accession>
<evidence type="ECO:0000255" key="1">
    <source>
        <dbReference type="HAMAP-Rule" id="MF_00793"/>
    </source>
</evidence>
<organism>
    <name type="scientific">Prochlorococcus marinus (strain MIT 9211)</name>
    <dbReference type="NCBI Taxonomy" id="93059"/>
    <lineage>
        <taxon>Bacteria</taxon>
        <taxon>Bacillati</taxon>
        <taxon>Cyanobacteriota</taxon>
        <taxon>Cyanophyceae</taxon>
        <taxon>Synechococcales</taxon>
        <taxon>Prochlorococcaceae</taxon>
        <taxon>Prochlorococcus</taxon>
    </lineage>
</organism>
<keyword id="KW-0560">Oxidoreductase</keyword>
<keyword id="KW-1185">Reference proteome</keyword>